<keyword id="KW-0413">Isomerase</keyword>
<keyword id="KW-1185">Reference proteome</keyword>
<keyword id="KW-0819">tRNA processing</keyword>
<organism>
    <name type="scientific">Leptospira interrogans serogroup Icterohaemorrhagiae serovar Lai (strain 56601)</name>
    <dbReference type="NCBI Taxonomy" id="189518"/>
    <lineage>
        <taxon>Bacteria</taxon>
        <taxon>Pseudomonadati</taxon>
        <taxon>Spirochaetota</taxon>
        <taxon>Spirochaetia</taxon>
        <taxon>Leptospirales</taxon>
        <taxon>Leptospiraceae</taxon>
        <taxon>Leptospira</taxon>
    </lineage>
</organism>
<proteinExistence type="inferred from homology"/>
<comment type="function">
    <text evidence="1">Formation of pseudouridine at positions 38, 39 and 40 in the anticodon stem and loop of transfer RNAs.</text>
</comment>
<comment type="catalytic activity">
    <reaction>
        <text>uridine(38/39/40) in tRNA = pseudouridine(38/39/40) in tRNA</text>
        <dbReference type="Rhea" id="RHEA:22376"/>
        <dbReference type="Rhea" id="RHEA-COMP:10085"/>
        <dbReference type="Rhea" id="RHEA-COMP:10087"/>
        <dbReference type="ChEBI" id="CHEBI:65314"/>
        <dbReference type="ChEBI" id="CHEBI:65315"/>
        <dbReference type="EC" id="5.4.99.12"/>
    </reaction>
</comment>
<comment type="subunit">
    <text evidence="1">Homodimer.</text>
</comment>
<comment type="similarity">
    <text evidence="2">Belongs to the tRNA pseudouridine synthase TruA family.</text>
</comment>
<name>TRUA_LEPIN</name>
<evidence type="ECO:0000250" key="1"/>
<evidence type="ECO:0000305" key="2"/>
<feature type="chain" id="PRO_0000057401" description="tRNA pseudouridine synthase A">
    <location>
        <begin position="1"/>
        <end position="207"/>
    </location>
</feature>
<feature type="active site" description="Nucleophile" evidence="1">
    <location>
        <position position="26"/>
    </location>
</feature>
<feature type="binding site" evidence="1">
    <location>
        <position position="52"/>
    </location>
    <ligand>
        <name>substrate</name>
    </ligand>
</feature>
<reference key="1">
    <citation type="journal article" date="2003" name="Nature">
        <title>Unique physiological and pathogenic features of Leptospira interrogans revealed by whole-genome sequencing.</title>
        <authorList>
            <person name="Ren S.-X."/>
            <person name="Fu G."/>
            <person name="Jiang X.-G."/>
            <person name="Zeng R."/>
            <person name="Miao Y.-G."/>
            <person name="Xu H."/>
            <person name="Zhang Y.-X."/>
            <person name="Xiong H."/>
            <person name="Lu G."/>
            <person name="Lu L.-F."/>
            <person name="Jiang H.-Q."/>
            <person name="Jia J."/>
            <person name="Tu Y.-F."/>
            <person name="Jiang J.-X."/>
            <person name="Gu W.-Y."/>
            <person name="Zhang Y.-Q."/>
            <person name="Cai Z."/>
            <person name="Sheng H.-H."/>
            <person name="Yin H.-F."/>
            <person name="Zhang Y."/>
            <person name="Zhu G.-F."/>
            <person name="Wan M."/>
            <person name="Huang H.-L."/>
            <person name="Qian Z."/>
            <person name="Wang S.-Y."/>
            <person name="Ma W."/>
            <person name="Yao Z.-J."/>
            <person name="Shen Y."/>
            <person name="Qiang B.-Q."/>
            <person name="Xia Q.-C."/>
            <person name="Guo X.-K."/>
            <person name="Danchin A."/>
            <person name="Saint Girons I."/>
            <person name="Somerville R.L."/>
            <person name="Wen Y.-M."/>
            <person name="Shi M.-H."/>
            <person name="Chen Z."/>
            <person name="Xu J.-G."/>
            <person name="Zhao G.-P."/>
        </authorList>
    </citation>
    <scope>NUCLEOTIDE SEQUENCE [LARGE SCALE GENOMIC DNA]</scope>
    <source>
        <strain>56601</strain>
    </source>
</reference>
<protein>
    <recommendedName>
        <fullName>tRNA pseudouridine synthase A</fullName>
        <ecNumber>5.4.99.12</ecNumber>
    </recommendedName>
    <alternativeName>
        <fullName>tRNA pseudouridine(38-40) synthase</fullName>
    </alternativeName>
    <alternativeName>
        <fullName>tRNA pseudouridylate synthase I</fullName>
    </alternativeName>
    <alternativeName>
        <fullName>tRNA-uridine isomerase I</fullName>
    </alternativeName>
</protein>
<dbReference type="EC" id="5.4.99.12"/>
<dbReference type="EMBL" id="AE010300">
    <property type="protein sequence ID" value="AAN49939.1"/>
    <property type="molecule type" value="Genomic_DNA"/>
</dbReference>
<dbReference type="RefSeq" id="NP_712921.1">
    <property type="nucleotide sequence ID" value="NC_004342.2"/>
</dbReference>
<dbReference type="SMR" id="Q8CXS6"/>
<dbReference type="FunCoup" id="Q8CXS6">
    <property type="interactions" value="440"/>
</dbReference>
<dbReference type="STRING" id="189518.LA_2740"/>
<dbReference type="PaxDb" id="189518-LA_2740"/>
<dbReference type="EnsemblBacteria" id="AAN49939">
    <property type="protein sequence ID" value="AAN49939"/>
    <property type="gene ID" value="LA_2740"/>
</dbReference>
<dbReference type="KEGG" id="lil:LA_2740"/>
<dbReference type="PATRIC" id="fig|189518.3.peg.2722"/>
<dbReference type="HOGENOM" id="CLU_014673_0_1_12"/>
<dbReference type="InParanoid" id="Q8CXS6"/>
<dbReference type="OrthoDB" id="9811823at2"/>
<dbReference type="Proteomes" id="UP000001408">
    <property type="component" value="Chromosome I"/>
</dbReference>
<dbReference type="GO" id="GO:0009982">
    <property type="term" value="F:pseudouridine synthase activity"/>
    <property type="evidence" value="ECO:0000318"/>
    <property type="project" value="GO_Central"/>
</dbReference>
<dbReference type="GO" id="GO:0003723">
    <property type="term" value="F:RNA binding"/>
    <property type="evidence" value="ECO:0007669"/>
    <property type="project" value="InterPro"/>
</dbReference>
<dbReference type="GO" id="GO:0160147">
    <property type="term" value="F:tRNA pseudouridine(38-40) synthase activity"/>
    <property type="evidence" value="ECO:0007669"/>
    <property type="project" value="UniProtKB-EC"/>
</dbReference>
<dbReference type="GO" id="GO:0031119">
    <property type="term" value="P:tRNA pseudouridine synthesis"/>
    <property type="evidence" value="ECO:0000318"/>
    <property type="project" value="GO_Central"/>
</dbReference>
<dbReference type="Gene3D" id="3.30.70.660">
    <property type="entry name" value="Pseudouridine synthase I, catalytic domain, C-terminal subdomain"/>
    <property type="match status" value="1"/>
</dbReference>
<dbReference type="InterPro" id="IPR020103">
    <property type="entry name" value="PsdUridine_synth_cat_dom_sf"/>
</dbReference>
<dbReference type="InterPro" id="IPR001406">
    <property type="entry name" value="PsdUridine_synth_TruA"/>
</dbReference>
<dbReference type="InterPro" id="IPR020097">
    <property type="entry name" value="PsdUridine_synth_TruA_a/b_dom"/>
</dbReference>
<dbReference type="InterPro" id="IPR020095">
    <property type="entry name" value="PsdUridine_synth_TruA_C"/>
</dbReference>
<dbReference type="PANTHER" id="PTHR11142">
    <property type="entry name" value="PSEUDOURIDYLATE SYNTHASE"/>
    <property type="match status" value="1"/>
</dbReference>
<dbReference type="PANTHER" id="PTHR11142:SF0">
    <property type="entry name" value="TRNA PSEUDOURIDINE SYNTHASE-LIKE 1"/>
    <property type="match status" value="1"/>
</dbReference>
<dbReference type="Pfam" id="PF01416">
    <property type="entry name" value="PseudoU_synth_1"/>
    <property type="match status" value="1"/>
</dbReference>
<dbReference type="SUPFAM" id="SSF55120">
    <property type="entry name" value="Pseudouridine synthase"/>
    <property type="match status" value="1"/>
</dbReference>
<gene>
    <name type="primary">truA</name>
    <name type="ordered locus">LA_2740</name>
</gene>
<sequence>MIVNFKTQRVIQNFSKFLLSLNAITDSGLSILNMTEVDENFDSRFSCNSREYEYWILNTKYPRPTWKNRTFWYQHRIDVPRLEAELELLKGEHDFRSLAKVASLKGRSTVRTILDVKLERSLELEGLLKVKIRANGFLHNMIRILTGTLLEISNGKRKDTNVLEILSSKDRTIAGITLPPYGLYFIRAYYDSYPKIDFMYSHLDFLK</sequence>
<accession>Q8CXS6</accession>